<gene>
    <name evidence="1" type="primary">ispH</name>
    <name type="synonym">lytB</name>
    <name type="ordered locus">CT_859</name>
</gene>
<proteinExistence type="inferred from homology"/>
<reference key="1">
    <citation type="journal article" date="1998" name="Science">
        <title>Genome sequence of an obligate intracellular pathogen of humans: Chlamydia trachomatis.</title>
        <authorList>
            <person name="Stephens R.S."/>
            <person name="Kalman S."/>
            <person name="Lammel C.J."/>
            <person name="Fan J."/>
            <person name="Marathe R."/>
            <person name="Aravind L."/>
            <person name="Mitchell W.P."/>
            <person name="Olinger L."/>
            <person name="Tatusov R.L."/>
            <person name="Zhao Q."/>
            <person name="Koonin E.V."/>
            <person name="Davis R.W."/>
        </authorList>
    </citation>
    <scope>NUCLEOTIDE SEQUENCE [LARGE SCALE GENOMIC DNA]</scope>
    <source>
        <strain>ATCC VR-885 / DSM 19411 / UW-3/Cx</strain>
    </source>
</reference>
<name>ISPH_CHLTR</name>
<accession>O84867</accession>
<comment type="function">
    <text evidence="1">Catalyzes the conversion of 1-hydroxy-2-methyl-2-(E)-butenyl 4-diphosphate (HMBPP) into a mixture of isopentenyl diphosphate (IPP) and dimethylallyl diphosphate (DMAPP). Acts in the terminal step of the DOXP/MEP pathway for isoprenoid precursor biosynthesis.</text>
</comment>
<comment type="catalytic activity">
    <reaction evidence="1">
        <text>isopentenyl diphosphate + 2 oxidized [2Fe-2S]-[ferredoxin] + H2O = (2E)-4-hydroxy-3-methylbut-2-enyl diphosphate + 2 reduced [2Fe-2S]-[ferredoxin] + 2 H(+)</text>
        <dbReference type="Rhea" id="RHEA:24488"/>
        <dbReference type="Rhea" id="RHEA-COMP:10000"/>
        <dbReference type="Rhea" id="RHEA-COMP:10001"/>
        <dbReference type="ChEBI" id="CHEBI:15377"/>
        <dbReference type="ChEBI" id="CHEBI:15378"/>
        <dbReference type="ChEBI" id="CHEBI:33737"/>
        <dbReference type="ChEBI" id="CHEBI:33738"/>
        <dbReference type="ChEBI" id="CHEBI:128753"/>
        <dbReference type="ChEBI" id="CHEBI:128769"/>
        <dbReference type="EC" id="1.17.7.4"/>
    </reaction>
</comment>
<comment type="catalytic activity">
    <reaction evidence="1">
        <text>dimethylallyl diphosphate + 2 oxidized [2Fe-2S]-[ferredoxin] + H2O = (2E)-4-hydroxy-3-methylbut-2-enyl diphosphate + 2 reduced [2Fe-2S]-[ferredoxin] + 2 H(+)</text>
        <dbReference type="Rhea" id="RHEA:24825"/>
        <dbReference type="Rhea" id="RHEA-COMP:10000"/>
        <dbReference type="Rhea" id="RHEA-COMP:10001"/>
        <dbReference type="ChEBI" id="CHEBI:15377"/>
        <dbReference type="ChEBI" id="CHEBI:15378"/>
        <dbReference type="ChEBI" id="CHEBI:33737"/>
        <dbReference type="ChEBI" id="CHEBI:33738"/>
        <dbReference type="ChEBI" id="CHEBI:57623"/>
        <dbReference type="ChEBI" id="CHEBI:128753"/>
        <dbReference type="EC" id="1.17.7.4"/>
    </reaction>
</comment>
<comment type="cofactor">
    <cofactor evidence="1">
        <name>[4Fe-4S] cluster</name>
        <dbReference type="ChEBI" id="CHEBI:49883"/>
    </cofactor>
    <text evidence="1">Binds 1 [4Fe-4S] cluster per subunit.</text>
</comment>
<comment type="pathway">
    <text evidence="1">Isoprenoid biosynthesis; dimethylallyl diphosphate biosynthesis; dimethylallyl diphosphate from (2E)-4-hydroxy-3-methylbutenyl diphosphate: step 1/1.</text>
</comment>
<comment type="pathway">
    <text evidence="1">Isoprenoid biosynthesis; isopentenyl diphosphate biosynthesis via DXP pathway; isopentenyl diphosphate from 1-deoxy-D-xylulose 5-phosphate: step 6/6.</text>
</comment>
<comment type="similarity">
    <text evidence="1">Belongs to the IspH family.</text>
</comment>
<protein>
    <recommendedName>
        <fullName evidence="1">4-hydroxy-3-methylbut-2-enyl diphosphate reductase</fullName>
        <shortName evidence="1">HMBPP reductase</shortName>
        <ecNumber evidence="1">1.17.7.4</ecNumber>
    </recommendedName>
</protein>
<evidence type="ECO:0000255" key="1">
    <source>
        <dbReference type="HAMAP-Rule" id="MF_00191"/>
    </source>
</evidence>
<feature type="chain" id="PRO_0000128803" description="4-hydroxy-3-methylbut-2-enyl diphosphate reductase">
    <location>
        <begin position="1"/>
        <end position="307"/>
    </location>
</feature>
<feature type="active site" description="Proton donor" evidence="1">
    <location>
        <position position="127"/>
    </location>
</feature>
<feature type="binding site" evidence="1">
    <location>
        <position position="13"/>
    </location>
    <ligand>
        <name>[4Fe-4S] cluster</name>
        <dbReference type="ChEBI" id="CHEBI:49883"/>
    </ligand>
</feature>
<feature type="binding site" evidence="1">
    <location>
        <position position="42"/>
    </location>
    <ligand>
        <name>(2E)-4-hydroxy-3-methylbut-2-enyl diphosphate</name>
        <dbReference type="ChEBI" id="CHEBI:128753"/>
    </ligand>
</feature>
<feature type="binding site" evidence="1">
    <location>
        <position position="42"/>
    </location>
    <ligand>
        <name>dimethylallyl diphosphate</name>
        <dbReference type="ChEBI" id="CHEBI:57623"/>
    </ligand>
</feature>
<feature type="binding site" evidence="1">
    <location>
        <position position="42"/>
    </location>
    <ligand>
        <name>isopentenyl diphosphate</name>
        <dbReference type="ChEBI" id="CHEBI:128769"/>
    </ligand>
</feature>
<feature type="binding site" evidence="1">
    <location>
        <position position="75"/>
    </location>
    <ligand>
        <name>(2E)-4-hydroxy-3-methylbut-2-enyl diphosphate</name>
        <dbReference type="ChEBI" id="CHEBI:128753"/>
    </ligand>
</feature>
<feature type="binding site" evidence="1">
    <location>
        <position position="75"/>
    </location>
    <ligand>
        <name>dimethylallyl diphosphate</name>
        <dbReference type="ChEBI" id="CHEBI:57623"/>
    </ligand>
</feature>
<feature type="binding site" evidence="1">
    <location>
        <position position="75"/>
    </location>
    <ligand>
        <name>isopentenyl diphosphate</name>
        <dbReference type="ChEBI" id="CHEBI:128769"/>
    </ligand>
</feature>
<feature type="binding site" evidence="1">
    <location>
        <position position="97"/>
    </location>
    <ligand>
        <name>[4Fe-4S] cluster</name>
        <dbReference type="ChEBI" id="CHEBI:49883"/>
    </ligand>
</feature>
<feature type="binding site" evidence="1">
    <location>
        <position position="125"/>
    </location>
    <ligand>
        <name>(2E)-4-hydroxy-3-methylbut-2-enyl diphosphate</name>
        <dbReference type="ChEBI" id="CHEBI:128753"/>
    </ligand>
</feature>
<feature type="binding site" evidence="1">
    <location>
        <position position="125"/>
    </location>
    <ligand>
        <name>dimethylallyl diphosphate</name>
        <dbReference type="ChEBI" id="CHEBI:57623"/>
    </ligand>
</feature>
<feature type="binding site" evidence="1">
    <location>
        <position position="125"/>
    </location>
    <ligand>
        <name>isopentenyl diphosphate</name>
        <dbReference type="ChEBI" id="CHEBI:128769"/>
    </ligand>
</feature>
<feature type="binding site" evidence="1">
    <location>
        <position position="165"/>
    </location>
    <ligand>
        <name>(2E)-4-hydroxy-3-methylbut-2-enyl diphosphate</name>
        <dbReference type="ChEBI" id="CHEBI:128753"/>
    </ligand>
</feature>
<feature type="binding site" evidence="1">
    <location>
        <position position="195"/>
    </location>
    <ligand>
        <name>[4Fe-4S] cluster</name>
        <dbReference type="ChEBI" id="CHEBI:49883"/>
    </ligand>
</feature>
<feature type="binding site" evidence="1">
    <location>
        <position position="223"/>
    </location>
    <ligand>
        <name>(2E)-4-hydroxy-3-methylbut-2-enyl diphosphate</name>
        <dbReference type="ChEBI" id="CHEBI:128753"/>
    </ligand>
</feature>
<feature type="binding site" evidence="1">
    <location>
        <position position="223"/>
    </location>
    <ligand>
        <name>dimethylallyl diphosphate</name>
        <dbReference type="ChEBI" id="CHEBI:57623"/>
    </ligand>
</feature>
<feature type="binding site" evidence="1">
    <location>
        <position position="223"/>
    </location>
    <ligand>
        <name>isopentenyl diphosphate</name>
        <dbReference type="ChEBI" id="CHEBI:128769"/>
    </ligand>
</feature>
<feature type="binding site" evidence="1">
    <location>
        <position position="224"/>
    </location>
    <ligand>
        <name>(2E)-4-hydroxy-3-methylbut-2-enyl diphosphate</name>
        <dbReference type="ChEBI" id="CHEBI:128753"/>
    </ligand>
</feature>
<feature type="binding site" evidence="1">
    <location>
        <position position="224"/>
    </location>
    <ligand>
        <name>dimethylallyl diphosphate</name>
        <dbReference type="ChEBI" id="CHEBI:57623"/>
    </ligand>
</feature>
<feature type="binding site" evidence="1">
    <location>
        <position position="224"/>
    </location>
    <ligand>
        <name>isopentenyl diphosphate</name>
        <dbReference type="ChEBI" id="CHEBI:128769"/>
    </ligand>
</feature>
<feature type="binding site" evidence="1">
    <location>
        <position position="225"/>
    </location>
    <ligand>
        <name>(2E)-4-hydroxy-3-methylbut-2-enyl diphosphate</name>
        <dbReference type="ChEBI" id="CHEBI:128753"/>
    </ligand>
</feature>
<feature type="binding site" evidence="1">
    <location>
        <position position="225"/>
    </location>
    <ligand>
        <name>dimethylallyl diphosphate</name>
        <dbReference type="ChEBI" id="CHEBI:57623"/>
    </ligand>
</feature>
<feature type="binding site" evidence="1">
    <location>
        <position position="225"/>
    </location>
    <ligand>
        <name>isopentenyl diphosphate</name>
        <dbReference type="ChEBI" id="CHEBI:128769"/>
    </ligand>
</feature>
<feature type="binding site" evidence="1">
    <location>
        <position position="267"/>
    </location>
    <ligand>
        <name>(2E)-4-hydroxy-3-methylbut-2-enyl diphosphate</name>
        <dbReference type="ChEBI" id="CHEBI:128753"/>
    </ligand>
</feature>
<feature type="binding site" evidence="1">
    <location>
        <position position="267"/>
    </location>
    <ligand>
        <name>dimethylallyl diphosphate</name>
        <dbReference type="ChEBI" id="CHEBI:57623"/>
    </ligand>
</feature>
<feature type="binding site" evidence="1">
    <location>
        <position position="267"/>
    </location>
    <ligand>
        <name>isopentenyl diphosphate</name>
        <dbReference type="ChEBI" id="CHEBI:128769"/>
    </ligand>
</feature>
<dbReference type="EC" id="1.17.7.4" evidence="1"/>
<dbReference type="EMBL" id="AE001273">
    <property type="protein sequence ID" value="AAC68457.1"/>
    <property type="molecule type" value="Genomic_DNA"/>
</dbReference>
<dbReference type="PIR" id="B71461">
    <property type="entry name" value="B71461"/>
</dbReference>
<dbReference type="RefSeq" id="NP_220381.1">
    <property type="nucleotide sequence ID" value="NC_000117.1"/>
</dbReference>
<dbReference type="RefSeq" id="WP_009872248.1">
    <property type="nucleotide sequence ID" value="NC_000117.1"/>
</dbReference>
<dbReference type="SMR" id="O84867"/>
<dbReference type="FunCoup" id="O84867">
    <property type="interactions" value="177"/>
</dbReference>
<dbReference type="STRING" id="272561.CT_859"/>
<dbReference type="EnsemblBacteria" id="AAC68457">
    <property type="protein sequence ID" value="AAC68457"/>
    <property type="gene ID" value="CT_859"/>
</dbReference>
<dbReference type="GeneID" id="884663"/>
<dbReference type="KEGG" id="ctr:CT_859"/>
<dbReference type="PATRIC" id="fig|272561.5.peg.949"/>
<dbReference type="HOGENOM" id="CLU_027486_1_0_0"/>
<dbReference type="InParanoid" id="O84867"/>
<dbReference type="OrthoDB" id="9777362at2"/>
<dbReference type="UniPathway" id="UPA00056">
    <property type="reaction ID" value="UER00097"/>
</dbReference>
<dbReference type="UniPathway" id="UPA00059">
    <property type="reaction ID" value="UER00105"/>
</dbReference>
<dbReference type="Proteomes" id="UP000000431">
    <property type="component" value="Chromosome"/>
</dbReference>
<dbReference type="GO" id="GO:0005829">
    <property type="term" value="C:cytosol"/>
    <property type="evidence" value="ECO:0000318"/>
    <property type="project" value="GO_Central"/>
</dbReference>
<dbReference type="GO" id="GO:0051539">
    <property type="term" value="F:4 iron, 4 sulfur cluster binding"/>
    <property type="evidence" value="ECO:0007669"/>
    <property type="project" value="UniProtKB-UniRule"/>
</dbReference>
<dbReference type="GO" id="GO:0051745">
    <property type="term" value="F:4-hydroxy-3-methylbut-2-enyl diphosphate reductase activity"/>
    <property type="evidence" value="ECO:0000318"/>
    <property type="project" value="GO_Central"/>
</dbReference>
<dbReference type="GO" id="GO:0046872">
    <property type="term" value="F:metal ion binding"/>
    <property type="evidence" value="ECO:0007669"/>
    <property type="project" value="UniProtKB-KW"/>
</dbReference>
<dbReference type="GO" id="GO:0050992">
    <property type="term" value="P:dimethylallyl diphosphate biosynthetic process"/>
    <property type="evidence" value="ECO:0007669"/>
    <property type="project" value="UniProtKB-UniRule"/>
</dbReference>
<dbReference type="GO" id="GO:0019288">
    <property type="term" value="P:isopentenyl diphosphate biosynthetic process, methylerythritol 4-phosphate pathway"/>
    <property type="evidence" value="ECO:0000318"/>
    <property type="project" value="GO_Central"/>
</dbReference>
<dbReference type="GO" id="GO:0016114">
    <property type="term" value="P:terpenoid biosynthetic process"/>
    <property type="evidence" value="ECO:0007669"/>
    <property type="project" value="UniProtKB-UniRule"/>
</dbReference>
<dbReference type="CDD" id="cd13944">
    <property type="entry name" value="lytB_ispH"/>
    <property type="match status" value="1"/>
</dbReference>
<dbReference type="Gene3D" id="3.40.50.11270">
    <property type="match status" value="1"/>
</dbReference>
<dbReference type="Gene3D" id="3.40.1010.20">
    <property type="entry name" value="4-hydroxy-3-methylbut-2-enyl diphosphate reductase, catalytic domain"/>
    <property type="match status" value="2"/>
</dbReference>
<dbReference type="HAMAP" id="MF_00191">
    <property type="entry name" value="IspH"/>
    <property type="match status" value="1"/>
</dbReference>
<dbReference type="InterPro" id="IPR003451">
    <property type="entry name" value="LytB/IspH"/>
</dbReference>
<dbReference type="NCBIfam" id="TIGR00216">
    <property type="entry name" value="ispH_lytB"/>
    <property type="match status" value="1"/>
</dbReference>
<dbReference type="NCBIfam" id="NF002190">
    <property type="entry name" value="PRK01045.1-4"/>
    <property type="match status" value="1"/>
</dbReference>
<dbReference type="PANTHER" id="PTHR30426">
    <property type="entry name" value="4-HYDROXY-3-METHYLBUT-2-ENYL DIPHOSPHATE REDUCTASE"/>
    <property type="match status" value="1"/>
</dbReference>
<dbReference type="PANTHER" id="PTHR30426:SF0">
    <property type="entry name" value="4-HYDROXY-3-METHYLBUT-2-ENYL DIPHOSPHATE REDUCTASE"/>
    <property type="match status" value="1"/>
</dbReference>
<dbReference type="Pfam" id="PF02401">
    <property type="entry name" value="LYTB"/>
    <property type="match status" value="1"/>
</dbReference>
<keyword id="KW-0004">4Fe-4S</keyword>
<keyword id="KW-0408">Iron</keyword>
<keyword id="KW-0411">Iron-sulfur</keyword>
<keyword id="KW-0414">Isoprene biosynthesis</keyword>
<keyword id="KW-0479">Metal-binding</keyword>
<keyword id="KW-0560">Oxidoreductase</keyword>
<keyword id="KW-1185">Reference proteome</keyword>
<organism>
    <name type="scientific">Chlamydia trachomatis serovar D (strain ATCC VR-885 / DSM 19411 / UW-3/Cx)</name>
    <dbReference type="NCBI Taxonomy" id="272561"/>
    <lineage>
        <taxon>Bacteria</taxon>
        <taxon>Pseudomonadati</taxon>
        <taxon>Chlamydiota</taxon>
        <taxon>Chlamydiia</taxon>
        <taxon>Chlamydiales</taxon>
        <taxon>Chlamydiaceae</taxon>
        <taxon>Chlamydia/Chlamydophila group</taxon>
        <taxon>Chlamydia</taxon>
    </lineage>
</organism>
<sequence length="307" mass="34208">MRKIILCSPRGFCAGVIRAIQTVEVALEKWGRPIYVKHEIVHNRHVVDKLREKGAIFIEDLQEVPRNSRVIFSAHGVPPSVREEAEERGLIAIDATCGLVTKVHSAVKMYAKKGYHIILIGKRKHVEIIGIRGEAPDQITVVENIAEVEALPFSAQDPLFYVTQTTLSMDDAADIVAALKARYPRIFTLPSSSICYATQNRQGALRNILPQVDFVYVIGDTQSSNSNRLREVAERRGVTARLVNHPDEVTEEILQYSGNIGITAGASTPEDVVQACLMKLQELIPDLSIEMDLFVEEDTVFQLPKEL</sequence>